<accession>Q155U0</accession>
<organism>
    <name type="scientific">Danio rerio</name>
    <name type="common">Zebrafish</name>
    <name type="synonym">Brachydanio rerio</name>
    <dbReference type="NCBI Taxonomy" id="7955"/>
    <lineage>
        <taxon>Eukaryota</taxon>
        <taxon>Metazoa</taxon>
        <taxon>Chordata</taxon>
        <taxon>Craniata</taxon>
        <taxon>Vertebrata</taxon>
        <taxon>Euteleostomi</taxon>
        <taxon>Actinopterygii</taxon>
        <taxon>Neopterygii</taxon>
        <taxon>Teleostei</taxon>
        <taxon>Ostariophysi</taxon>
        <taxon>Cypriniformes</taxon>
        <taxon>Danionidae</taxon>
        <taxon>Danioninae</taxon>
        <taxon>Danio</taxon>
    </lineage>
</organism>
<keyword id="KW-0175">Coiled coil</keyword>
<keyword id="KW-0967">Endosome</keyword>
<keyword id="KW-0333">Golgi apparatus</keyword>
<keyword id="KW-0445">Lipid transport</keyword>
<keyword id="KW-0653">Protein transport</keyword>
<keyword id="KW-1185">Reference proteome</keyword>
<keyword id="KW-0813">Transport</keyword>
<proteinExistence type="evidence at transcript level"/>
<comment type="function">
    <text evidence="1 4">Involved in retrograde transport from early and late endosomes to the late Golgi. The GARP complex is required for the maintenance of protein retrieval from endosomes to the TGN, acid hydrolase sorting, lysosome function, endosomal cholesterol traffic and autophagy (PubMed:16581006). Acts as a component of the EARP complex that is involved in endocytic recycling (By similarity).</text>
</comment>
<comment type="subunit">
    <text evidence="1">Component of the Golgi-associated retrograde protein (GARP) complex Component of the endosome-associated retrograde protein (EARP) complex.</text>
</comment>
<comment type="subcellular location">
    <subcellularLocation>
        <location evidence="4">Golgi apparatus</location>
        <location evidence="4">trans-Golgi network</location>
    </subcellularLocation>
    <subcellularLocation>
        <location evidence="1">Recycling endosome</location>
    </subcellularLocation>
    <text evidence="1 4">Also localizes in perinuclear region (PubMed:16581006). Localizes to the trans-Golgi network as part of the GARP complex, while it localizes to recycling endosomes as part of the EARP complex (By similarity).</text>
</comment>
<comment type="tissue specificity">
    <text evidence="4">Ubiquitously expressed in adult.</text>
</comment>
<comment type="disruption phenotype">
    <text evidence="4">Larvae are morphologically indistinguishable from wild-type sibling larvae, but their absorption of lipids is severely impaired.</text>
</comment>
<comment type="similarity">
    <text evidence="5">Belongs to the VPS51 family.</text>
</comment>
<name>VPS51_DANRE</name>
<sequence length="827" mass="92316">MSSATTPPDSDPAQRRRVHSMLKLYYGLNEEGKATEQAESLDPCDINGPHFDPEIYLNKLRKECSLTELMDHESCMVKQIRSLDSDMQTLVYENYNKFISATDTIRKMKNDFKKMEDEMDCLSANMAAITEFSARISGTLQDQHAQITKLSGVHTLLRKLQFLFELPARLNKCLELQAYAQAVSSHRRARCVLQQYSHMPSFRGIQDDCHVIMEQLAQQLRQKFRDGGSSAKDLSECVELLLQLDEPAEELCDKFLSHAQSRLEADLQGLEAELKDSAVTDTGAGSVQKTSPGSNPVSPSSSVSNPFLSPAAGTDILEFIDRGCNEFVSNLCLVIASYQELFINRPQESELASKNIPEMANGKLHVFVDTLAARYFSLVERRIQEEKGVGDNSLLVRALDRFHRRLQAISKLLPGSAVPSQGTEIVVRAARERIKQYLSALQTFYHDSLTDVRQALAAPRLSVGGASASGGGALVGGASSKDAPPSLPELLTSLSNFILNQLKSVLASVHLFTAKDITFSNKPYFKGEFCSQGVREGLVVSFIKFICQSSRQYCESAGDRGGSTPPALLLLLSRLCLDYETSTISYILTLTDEQFLVQHHTPVTPVTALCAEAREAAQKLLNHYVKVQGLIISQMLRKSVETRDWVNTIEPRNVRAVMKRVVEDTTSIDVQVGLLYEEGVRKAHSSDSSKRTFSVYSSSRQQIRYAPSYTPSAPMDTNLLSNIHKLFSERIDIFSPVEFNKVSVLTGIIKISLKTFLECVRLRTFGRYGLQQIQVDCHYLQMYLWRFVSDENLVHFLLDEIVGSAAHRCLDPSPMEQSVIEVICERG</sequence>
<feature type="chain" id="PRO_0000361540" description="Vacuolar protein sorting-associated protein 51 homolog">
    <location>
        <begin position="1"/>
        <end position="827"/>
    </location>
</feature>
<feature type="region of interest" description="Disordered" evidence="3">
    <location>
        <begin position="279"/>
        <end position="304"/>
    </location>
</feature>
<feature type="coiled-coil region" evidence="2">
    <location>
        <begin position="99"/>
        <end position="131"/>
    </location>
</feature>
<feature type="coiled-coil region" evidence="2">
    <location>
        <begin position="254"/>
        <end position="278"/>
    </location>
</feature>
<feature type="compositionally biased region" description="Polar residues" evidence="3">
    <location>
        <begin position="279"/>
        <end position="290"/>
    </location>
</feature>
<feature type="compositionally biased region" description="Low complexity" evidence="3">
    <location>
        <begin position="291"/>
        <end position="304"/>
    </location>
</feature>
<dbReference type="EMBL" id="DQ641948">
    <property type="protein sequence ID" value="ABG23689.1"/>
    <property type="molecule type" value="mRNA"/>
</dbReference>
<dbReference type="EMBL" id="BC162801">
    <property type="protein sequence ID" value="AAI62801.1"/>
    <property type="molecule type" value="mRNA"/>
</dbReference>
<dbReference type="EMBL" id="BC162802">
    <property type="protein sequence ID" value="AAI62802.1"/>
    <property type="molecule type" value="mRNA"/>
</dbReference>
<dbReference type="RefSeq" id="NP_001036200.1">
    <property type="nucleotide sequence ID" value="NM_001042735.1"/>
</dbReference>
<dbReference type="SMR" id="Q155U0"/>
<dbReference type="FunCoup" id="Q155U0">
    <property type="interactions" value="1468"/>
</dbReference>
<dbReference type="STRING" id="7955.ENSDARP00000083577"/>
<dbReference type="PaxDb" id="7955-ENSDARP00000083577"/>
<dbReference type="Ensembl" id="ENSDART00000188688">
    <property type="protein sequence ID" value="ENSDARP00000156118"/>
    <property type="gene ID" value="ENSDARG00000110076"/>
</dbReference>
<dbReference type="GeneID" id="559339"/>
<dbReference type="KEGG" id="dre:559339"/>
<dbReference type="AGR" id="ZFIN:ZDB-GENE-030131-6008"/>
<dbReference type="CTD" id="738"/>
<dbReference type="ZFIN" id="ZDB-GENE-030131-6008">
    <property type="gene designation" value="vps51"/>
</dbReference>
<dbReference type="eggNOG" id="KOG2346">
    <property type="taxonomic scope" value="Eukaryota"/>
</dbReference>
<dbReference type="InParanoid" id="Q155U0"/>
<dbReference type="OMA" id="GSRLCYD"/>
<dbReference type="OrthoDB" id="203678at2759"/>
<dbReference type="PhylomeDB" id="Q155U0"/>
<dbReference type="PRO" id="PR:Q155U0"/>
<dbReference type="Proteomes" id="UP000000437">
    <property type="component" value="Alternate scaffold 10"/>
</dbReference>
<dbReference type="Proteomes" id="UP000000437">
    <property type="component" value="Chromosome 10"/>
</dbReference>
<dbReference type="Bgee" id="ENSDARG00000110076">
    <property type="expression patterns" value="Expressed in multicellular organism"/>
</dbReference>
<dbReference type="GO" id="GO:0005829">
    <property type="term" value="C:cytosol"/>
    <property type="evidence" value="ECO:0007669"/>
    <property type="project" value="GOC"/>
</dbReference>
<dbReference type="GO" id="GO:1990745">
    <property type="term" value="C:EARP complex"/>
    <property type="evidence" value="ECO:0000250"/>
    <property type="project" value="UniProtKB"/>
</dbReference>
<dbReference type="GO" id="GO:0000938">
    <property type="term" value="C:GARP complex"/>
    <property type="evidence" value="ECO:0000250"/>
    <property type="project" value="UniProtKB"/>
</dbReference>
<dbReference type="GO" id="GO:0016020">
    <property type="term" value="C:membrane"/>
    <property type="evidence" value="ECO:0000318"/>
    <property type="project" value="GO_Central"/>
</dbReference>
<dbReference type="GO" id="GO:0055037">
    <property type="term" value="C:recycling endosome"/>
    <property type="evidence" value="ECO:0000250"/>
    <property type="project" value="UniProtKB"/>
</dbReference>
<dbReference type="GO" id="GO:0031267">
    <property type="term" value="F:small GTPase binding"/>
    <property type="evidence" value="ECO:0000353"/>
    <property type="project" value="ZFIN"/>
</dbReference>
<dbReference type="GO" id="GO:0032456">
    <property type="term" value="P:endocytic recycling"/>
    <property type="evidence" value="ECO:0000250"/>
    <property type="project" value="UniProtKB"/>
</dbReference>
<dbReference type="GO" id="GO:0007030">
    <property type="term" value="P:Golgi organization"/>
    <property type="evidence" value="ECO:0000315"/>
    <property type="project" value="ZFIN"/>
</dbReference>
<dbReference type="GO" id="GO:0048193">
    <property type="term" value="P:Golgi vesicle transport"/>
    <property type="evidence" value="ECO:0000315"/>
    <property type="project" value="ZFIN"/>
</dbReference>
<dbReference type="GO" id="GO:0044241">
    <property type="term" value="P:lipid digestion"/>
    <property type="evidence" value="ECO:0000315"/>
    <property type="project" value="ZFIN"/>
</dbReference>
<dbReference type="GO" id="GO:0006869">
    <property type="term" value="P:lipid transport"/>
    <property type="evidence" value="ECO:0007669"/>
    <property type="project" value="UniProtKB-KW"/>
</dbReference>
<dbReference type="GO" id="GO:0007041">
    <property type="term" value="P:lysosomal transport"/>
    <property type="evidence" value="ECO:0000318"/>
    <property type="project" value="GO_Central"/>
</dbReference>
<dbReference type="GO" id="GO:0015031">
    <property type="term" value="P:protein transport"/>
    <property type="evidence" value="ECO:0007669"/>
    <property type="project" value="UniProtKB-KW"/>
</dbReference>
<dbReference type="GO" id="GO:0042147">
    <property type="term" value="P:retrograde transport, endosome to Golgi"/>
    <property type="evidence" value="ECO:0000318"/>
    <property type="project" value="GO_Central"/>
</dbReference>
<dbReference type="InterPro" id="IPR016159">
    <property type="entry name" value="Cullin_repeat-like_dom_sf"/>
</dbReference>
<dbReference type="InterPro" id="IPR014812">
    <property type="entry name" value="Vps51"/>
</dbReference>
<dbReference type="PANTHER" id="PTHR15954">
    <property type="entry name" value="VACUOLAR PROTEIN SORTING-ASSOCIATED PROTEIN 51 HOMOLOG"/>
    <property type="match status" value="1"/>
</dbReference>
<dbReference type="PANTHER" id="PTHR15954:SF4">
    <property type="entry name" value="VACUOLAR PROTEIN SORTING-ASSOCIATED PROTEIN 51 HOMOLOG"/>
    <property type="match status" value="1"/>
</dbReference>
<dbReference type="Pfam" id="PF08700">
    <property type="entry name" value="VPS51_Exo84_N"/>
    <property type="match status" value="1"/>
</dbReference>
<dbReference type="SUPFAM" id="SSF74788">
    <property type="entry name" value="Cullin repeat-like"/>
    <property type="match status" value="1"/>
</dbReference>
<gene>
    <name type="primary">vps51</name>
    <name type="synonym">ffr</name>
</gene>
<protein>
    <recommendedName>
        <fullName>Vacuolar protein sorting-associated protein 51 homolog</fullName>
    </recommendedName>
    <alternativeName>
        <fullName>Protein fat-free</fullName>
    </alternativeName>
</protein>
<reference key="1">
    <citation type="journal article" date="2006" name="Cell Metab.">
        <title>Zebrafish fat-free is required for intestinal lipid absorption and Golgi apparatus structure.</title>
        <authorList>
            <person name="Ho S.-Y."/>
            <person name="Lorent K."/>
            <person name="Pack M."/>
            <person name="Farber S.A."/>
        </authorList>
    </citation>
    <scope>NUCLEOTIDE SEQUENCE [MRNA]</scope>
    <scope>FUNCTION</scope>
    <scope>SUBCELLULAR LOCATION</scope>
    <scope>TISSUE SPECIFICITY</scope>
    <scope>DISRUPTION PHENOTYPE</scope>
</reference>
<reference key="2">
    <citation type="submission" date="2008-04" db="EMBL/GenBank/DDBJ databases">
        <authorList>
            <consortium name="NIH - Zebrafish Gene Collection (ZGC) project"/>
        </authorList>
    </citation>
    <scope>NUCLEOTIDE SEQUENCE [LARGE SCALE MRNA]</scope>
</reference>
<evidence type="ECO:0000250" key="1">
    <source>
        <dbReference type="UniProtKB" id="Q9UID3"/>
    </source>
</evidence>
<evidence type="ECO:0000255" key="2"/>
<evidence type="ECO:0000256" key="3">
    <source>
        <dbReference type="SAM" id="MobiDB-lite"/>
    </source>
</evidence>
<evidence type="ECO:0000269" key="4">
    <source>
    </source>
</evidence>
<evidence type="ECO:0000305" key="5"/>